<keyword id="KW-0007">Acetylation</keyword>
<keyword id="KW-0903">Direct protein sequencing</keyword>
<keyword id="KW-0416">Keratin</keyword>
<keyword id="KW-1185">Reference proteome</keyword>
<keyword id="KW-0677">Repeat</keyword>
<comment type="function">
    <text>The keratin products of mammalian epidermal derivatives such as wool and hair consist of microfibrils embedded in a rigid matrix of other proteins. The matrix proteins include the high-sulfur and high-tyrosine keratins, having molecular weights of 6-20 kDa, whereas the microfibrils contain the larger, low-sulfur keratins (40-56 kDa).</text>
</comment>
<comment type="miscellaneous">
    <text>The source of this keratin is lincoln wool.</text>
</comment>
<reference key="1">
    <citation type="journal article" date="1983" name="Nucleic Acids Res.">
        <title>Mammalian keratin gene families: organisation of genes coding for the B2 high-sulphur proteins of sheep wool.</title>
        <authorList>
            <person name="Powell B.C."/>
            <person name="Sleigh M.J."/>
            <person name="Ward K.A."/>
            <person name="Rogers G.E."/>
        </authorList>
    </citation>
    <scope>NUCLEOTIDE SEQUENCE [GENOMIC DNA]</scope>
</reference>
<reference key="2">
    <citation type="journal article" date="1972" name="Biochem. J.">
        <title>The amino acid sequence of protein SCMK-B2A from the high-sulphur fraction of wool keratin.</title>
        <authorList>
            <person name="Elleman T.C."/>
        </authorList>
    </citation>
    <scope>PROTEIN SEQUENCE OF 2-172</scope>
    <scope>ACETYLATION AT ALA-2</scope>
</reference>
<sequence length="172" mass="17734">MACCSTSFCGFPICSTGGTCGSSPCQPTCCQTSCCQPTSIQTSCCQPISIQTSCCQPTSIQTSCCQPTCLQTSGCETGCGIGGSIGYGQVGSSGAVSSRTRWCRPDCRVEGTSLPPCCVVSCTPPSCCQLYYAQASCCRPSYCGQSCCRPACCCQPTCIEPICEPSCCEPTC</sequence>
<feature type="initiator methionine" description="Removed" evidence="1">
    <location>
        <position position="1"/>
    </location>
</feature>
<feature type="chain" id="PRO_0000084324" description="Keratin, high-sulfur matrix protein, B2A">
    <location>
        <begin position="2"/>
        <end position="172"/>
    </location>
</feature>
<feature type="repeat">
    <location>
        <begin position="27"/>
        <end position="36"/>
    </location>
</feature>
<feature type="repeat">
    <location>
        <begin position="37"/>
        <end position="46"/>
    </location>
</feature>
<feature type="repeat">
    <location>
        <begin position="47"/>
        <end position="56"/>
    </location>
</feature>
<feature type="repeat">
    <location>
        <begin position="57"/>
        <end position="66"/>
    </location>
</feature>
<feature type="repeat">
    <location>
        <begin position="67"/>
        <end position="76"/>
    </location>
</feature>
<feature type="modified residue" description="N-acetylalanine" evidence="1">
    <location>
        <position position="2"/>
    </location>
</feature>
<feature type="sequence variant" description="In minor component.">
    <original>I</original>
    <variation>T</variation>
    <location>
        <position position="13"/>
    </location>
</feature>
<feature type="sequence variant" description="In minor component.">
    <original>S</original>
    <variation>N</variation>
    <location>
        <position position="23"/>
    </location>
</feature>
<feature type="sequence variant" description="In minor component.">
    <original>P</original>
    <variation>F</variation>
    <location>
        <position position="24"/>
    </location>
</feature>
<name>KRB2A_SHEEP</name>
<dbReference type="EMBL" id="X01610">
    <property type="protein sequence ID" value="CAA25757.1"/>
    <property type="molecule type" value="Genomic_DNA"/>
</dbReference>
<dbReference type="PIR" id="S07910">
    <property type="entry name" value="KRSHHA"/>
</dbReference>
<dbReference type="STRING" id="9940.ENSOARP00000016860"/>
<dbReference type="iPTMnet" id="P02438"/>
<dbReference type="PaxDb" id="9940-ENSOARP00000016860"/>
<dbReference type="eggNOG" id="KOG4726">
    <property type="taxonomic scope" value="Eukaryota"/>
</dbReference>
<dbReference type="Proteomes" id="UP000002356">
    <property type="component" value="Unplaced"/>
</dbReference>
<dbReference type="GO" id="GO:0005829">
    <property type="term" value="C:cytosol"/>
    <property type="evidence" value="ECO:0007669"/>
    <property type="project" value="UniProtKB-ARBA"/>
</dbReference>
<dbReference type="GO" id="GO:0045095">
    <property type="term" value="C:keratin filament"/>
    <property type="evidence" value="ECO:0007669"/>
    <property type="project" value="InterPro"/>
</dbReference>
<dbReference type="InterPro" id="IPR002494">
    <property type="entry name" value="KAP"/>
</dbReference>
<dbReference type="Pfam" id="PF01500">
    <property type="entry name" value="Keratin_B2"/>
    <property type="match status" value="1"/>
</dbReference>
<proteinExistence type="evidence at protein level"/>
<accession>P02438</accession>
<protein>
    <recommendedName>
        <fullName>Keratin, high-sulfur matrix protein, B2A</fullName>
    </recommendedName>
</protein>
<organism>
    <name type="scientific">Ovis aries</name>
    <name type="common">Sheep</name>
    <dbReference type="NCBI Taxonomy" id="9940"/>
    <lineage>
        <taxon>Eukaryota</taxon>
        <taxon>Metazoa</taxon>
        <taxon>Chordata</taxon>
        <taxon>Craniata</taxon>
        <taxon>Vertebrata</taxon>
        <taxon>Euteleostomi</taxon>
        <taxon>Mammalia</taxon>
        <taxon>Eutheria</taxon>
        <taxon>Laurasiatheria</taxon>
        <taxon>Artiodactyla</taxon>
        <taxon>Ruminantia</taxon>
        <taxon>Pecora</taxon>
        <taxon>Bovidae</taxon>
        <taxon>Caprinae</taxon>
        <taxon>Ovis</taxon>
    </lineage>
</organism>
<evidence type="ECO:0000269" key="1">
    <source>
    </source>
</evidence>